<protein>
    <recommendedName>
        <fullName>Prolamin PPROL 17D</fullName>
    </recommendedName>
</protein>
<proteinExistence type="evidence at transcript level"/>
<reference key="1">
    <citation type="journal article" date="1988" name="Plant Physiol.">
        <title>Structure, expression, and heterogeneity of the rice seed prolamines.</title>
        <authorList>
            <person name="Kim W.T."/>
            <person name="Okita T.W."/>
        </authorList>
    </citation>
    <scope>NUCLEOTIDE SEQUENCE [MRNA]</scope>
    <source>
        <strain>cv. M201</strain>
        <tissue>Seed</tissue>
    </source>
</reference>
<reference key="2">
    <citation type="submission" date="1998-07" db="EMBL/GenBank/DDBJ databases">
        <title>Amino acid sequencing and cDNA cloning of major rice seed storage proteins, the 13 kDa prolamins, extrtacted from PB-I protein bodies.</title>
        <authorList>
            <person name="Mitsukawa N."/>
            <person name="Konishi R."/>
            <person name="Kidzu K."/>
            <person name="Ohtsuki K."/>
            <person name="Masumura T."/>
            <person name="Tanaka K."/>
        </authorList>
    </citation>
    <scope>NUCLEOTIDE SEQUENCE [MRNA]</scope>
</reference>
<reference key="3">
    <citation type="journal article" date="2005" name="BMC Biol.">
        <title>The sequence of rice chromosomes 11 and 12, rich in disease resistance genes and recent gene duplications.</title>
        <authorList>
            <consortium name="The rice chromosomes 11 and 12 sequencing consortia"/>
        </authorList>
    </citation>
    <scope>NUCLEOTIDE SEQUENCE [LARGE SCALE GENOMIC DNA]</scope>
    <source>
        <strain>cv. Nipponbare</strain>
    </source>
</reference>
<reference key="4">
    <citation type="journal article" date="2005" name="Nature">
        <title>The map-based sequence of the rice genome.</title>
        <authorList>
            <consortium name="International rice genome sequencing project (IRGSP)"/>
        </authorList>
    </citation>
    <scope>NUCLEOTIDE SEQUENCE [LARGE SCALE GENOMIC DNA]</scope>
    <source>
        <strain>cv. Nipponbare</strain>
    </source>
</reference>
<reference key="5">
    <citation type="journal article" date="2008" name="Nucleic Acids Res.">
        <title>The rice annotation project database (RAP-DB): 2008 update.</title>
        <authorList>
            <consortium name="The rice annotation project (RAP)"/>
        </authorList>
    </citation>
    <scope>GENOME REANNOTATION</scope>
    <source>
        <strain>cv. Nipponbare</strain>
    </source>
</reference>
<reference key="6">
    <citation type="journal article" date="2013" name="Rice">
        <title>Improvement of the Oryza sativa Nipponbare reference genome using next generation sequence and optical map data.</title>
        <authorList>
            <person name="Kawahara Y."/>
            <person name="de la Bastide M."/>
            <person name="Hamilton J.P."/>
            <person name="Kanamori H."/>
            <person name="McCombie W.R."/>
            <person name="Ouyang S."/>
            <person name="Schwartz D.C."/>
            <person name="Tanaka T."/>
            <person name="Wu J."/>
            <person name="Zhou S."/>
            <person name="Childs K.L."/>
            <person name="Davidson R.M."/>
            <person name="Lin H."/>
            <person name="Quesada-Ocampo L."/>
            <person name="Vaillancourt B."/>
            <person name="Sakai H."/>
            <person name="Lee S.S."/>
            <person name="Kim J."/>
            <person name="Numa H."/>
            <person name="Itoh T."/>
            <person name="Buell C.R."/>
            <person name="Matsumoto T."/>
        </authorList>
    </citation>
    <scope>GENOME REANNOTATION</scope>
    <source>
        <strain>cv. Nipponbare</strain>
    </source>
</reference>
<reference key="7">
    <citation type="journal article" date="2007" name="Plant J.">
        <title>Small cysteine-rich peptides resembling antimicrobial peptides have been under-predicted in plants.</title>
        <authorList>
            <person name="Silverstein K.A.T."/>
            <person name="Moskal W.A. Jr."/>
            <person name="Wu H.C."/>
            <person name="Underwood B.A."/>
            <person name="Graham M.A."/>
            <person name="Town C.D."/>
            <person name="VandenBosch K.A."/>
        </authorList>
    </citation>
    <scope>GENE FAMILY</scope>
    <scope>NOMENCLATURE</scope>
</reference>
<comment type="function">
    <text>Seed storage protein; serves as a source of nitrogen, carbon and sulfur for the young developing seedling.</text>
</comment>
<comment type="subcellular location">
    <subcellularLocation>
        <location>Vacuole</location>
        <location>Aleurone grain</location>
    </subcellularLocation>
    <text>In rice, prolamin accumulates as a type I protein body which originates directly from the endoplasmic reticulum.</text>
</comment>
<comment type="miscellaneous">
    <text>Lacks significant tandem repetitive sequences.</text>
</comment>
<comment type="similarity">
    <text evidence="2">Belongs to the prolamin family.</text>
</comment>
<comment type="sequence caution" evidence="2">
    <conflict type="frameshift">
        <sequence resource="EMBL-CDS" id="AAA50423"/>
    </conflict>
</comment>
<comment type="sequence caution" evidence="2">
    <conflict type="miscellaneous discrepancy">
        <sequence resource="EMBL-CDS" id="AAA50423"/>
    </conflict>
    <text>Sequencing errors.</text>
</comment>
<name>PRO28_ORYSJ</name>
<sequence length="156" mass="17562">MKIIFFFALLAIAACSASAQFDAVTQVYRQYQLQPHLMLQQQMLSPCGEFVRQQCSTVATPFFQSPVFQLRNCQVMQQQCCQQLRMIAQQSHCQAISSVQAIVQQLRLQQFASVYFDQSQAQAQAMLALNMPSICGIYPSYNTAPCSIPTVGGIWY</sequence>
<keyword id="KW-0873">Pyrrolidone carboxylic acid</keyword>
<keyword id="KW-1185">Reference proteome</keyword>
<keyword id="KW-0708">Seed storage protein</keyword>
<keyword id="KW-0732">Signal</keyword>
<keyword id="KW-0758">Storage protein</keyword>
<keyword id="KW-0926">Vacuole</keyword>
<accession>P20698</accession>
<accession>Q2QUA8</accession>
<accession>Q9ZWJ7</accession>
<feature type="signal peptide" evidence="1">
    <location>
        <begin position="1"/>
        <end position="19"/>
    </location>
</feature>
<feature type="chain" id="PRO_0000032266" description="Prolamin PPROL 17D">
    <location>
        <begin position="20"/>
        <end position="156"/>
    </location>
</feature>
<feature type="modified residue" description="Pyrrolidone carboxylic acid" evidence="1">
    <location>
        <position position="20"/>
    </location>
</feature>
<evidence type="ECO:0000255" key="1"/>
<evidence type="ECO:0000305" key="2"/>
<organism>
    <name type="scientific">Oryza sativa subsp. japonica</name>
    <name type="common">Rice</name>
    <dbReference type="NCBI Taxonomy" id="39947"/>
    <lineage>
        <taxon>Eukaryota</taxon>
        <taxon>Viridiplantae</taxon>
        <taxon>Streptophyta</taxon>
        <taxon>Embryophyta</taxon>
        <taxon>Tracheophyta</taxon>
        <taxon>Spermatophyta</taxon>
        <taxon>Magnoliopsida</taxon>
        <taxon>Liliopsida</taxon>
        <taxon>Poales</taxon>
        <taxon>Poaceae</taxon>
        <taxon>BOP clade</taxon>
        <taxon>Oryzoideae</taxon>
        <taxon>Oryzeae</taxon>
        <taxon>Oryzinae</taxon>
        <taxon>Oryza</taxon>
        <taxon>Oryza sativa</taxon>
    </lineage>
</organism>
<gene>
    <name type="ordered locus">Os12g0269200</name>
    <name type="ordered locus">LOC_Os12g16890</name>
</gene>
<dbReference type="EMBL" id="M23745">
    <property type="protein sequence ID" value="AAA50423.1"/>
    <property type="status" value="ALT_SEQ"/>
    <property type="molecule type" value="mRNA"/>
</dbReference>
<dbReference type="EMBL" id="AB016505">
    <property type="protein sequence ID" value="BAA36699.1"/>
    <property type="molecule type" value="mRNA"/>
</dbReference>
<dbReference type="EMBL" id="DP000011">
    <property type="protein sequence ID" value="ABA97054.1"/>
    <property type="molecule type" value="Genomic_DNA"/>
</dbReference>
<dbReference type="EMBL" id="AP008218">
    <property type="status" value="NOT_ANNOTATED_CDS"/>
    <property type="molecule type" value="Genomic_DNA"/>
</dbReference>
<dbReference type="EMBL" id="AP014968">
    <property type="protein sequence ID" value="BAT16637.1"/>
    <property type="molecule type" value="Genomic_DNA"/>
</dbReference>
<dbReference type="PIR" id="JA0167">
    <property type="entry name" value="JA0167"/>
</dbReference>
<dbReference type="FunCoup" id="P20698">
    <property type="interactions" value="20"/>
</dbReference>
<dbReference type="IntAct" id="P20698">
    <property type="interactions" value="2"/>
</dbReference>
<dbReference type="STRING" id="39947.P20698"/>
<dbReference type="PaxDb" id="39947-P20698"/>
<dbReference type="EnsemblPlants" id="Os12t0269200-01">
    <property type="protein sequence ID" value="Os12t0269200-01"/>
    <property type="gene ID" value="Os12g0269200"/>
</dbReference>
<dbReference type="Gramene" id="Os12t0269200-01">
    <property type="protein sequence ID" value="Os12t0269200-01"/>
    <property type="gene ID" value="Os12g0269200"/>
</dbReference>
<dbReference type="HOGENOM" id="CLU_081977_1_1_1"/>
<dbReference type="InParanoid" id="P20698"/>
<dbReference type="OMA" id="CIQTPYV"/>
<dbReference type="Proteomes" id="UP000000763">
    <property type="component" value="Chromosome 12"/>
</dbReference>
<dbReference type="Proteomes" id="UP000059680">
    <property type="component" value="Chromosome 12"/>
</dbReference>
<dbReference type="ExpressionAtlas" id="P20698">
    <property type="expression patterns" value="baseline and differential"/>
</dbReference>
<dbReference type="GO" id="GO:0033095">
    <property type="term" value="C:aleurone grain"/>
    <property type="evidence" value="ECO:0007669"/>
    <property type="project" value="UniProtKB-SubCell"/>
</dbReference>
<dbReference type="GO" id="GO:0005773">
    <property type="term" value="C:vacuole"/>
    <property type="evidence" value="ECO:0007669"/>
    <property type="project" value="UniProtKB-KW"/>
</dbReference>
<dbReference type="GO" id="GO:0045735">
    <property type="term" value="F:nutrient reservoir activity"/>
    <property type="evidence" value="ECO:0007669"/>
    <property type="project" value="UniProtKB-KW"/>
</dbReference>
<dbReference type="CDD" id="cd00261">
    <property type="entry name" value="AAI_SS"/>
    <property type="match status" value="1"/>
</dbReference>
<dbReference type="Gene3D" id="1.10.110.10">
    <property type="entry name" value="Plant lipid-transfer and hydrophobic proteins"/>
    <property type="match status" value="1"/>
</dbReference>
<dbReference type="InterPro" id="IPR036312">
    <property type="entry name" value="Bifun_inhib/LTP/seed_sf"/>
</dbReference>
<dbReference type="InterPro" id="IPR016140">
    <property type="entry name" value="Bifunc_inhib/LTP/seed_store"/>
</dbReference>
<dbReference type="InterPro" id="IPR001954">
    <property type="entry name" value="Glia_glutenin"/>
</dbReference>
<dbReference type="PANTHER" id="PTHR33454">
    <property type="entry name" value="PROLAMIN PPROL 14P"/>
    <property type="match status" value="1"/>
</dbReference>
<dbReference type="PANTHER" id="PTHR33454:SF19">
    <property type="entry name" value="PROLAMIN PPROL 14P"/>
    <property type="match status" value="1"/>
</dbReference>
<dbReference type="Pfam" id="PF13016">
    <property type="entry name" value="Gliadin"/>
    <property type="match status" value="1"/>
</dbReference>
<dbReference type="PRINTS" id="PR00208">
    <property type="entry name" value="GLIADGLUTEN"/>
</dbReference>
<dbReference type="SMART" id="SM00499">
    <property type="entry name" value="AAI"/>
    <property type="match status" value="1"/>
</dbReference>
<dbReference type="SUPFAM" id="SSF47699">
    <property type="entry name" value="Bifunctional inhibitor/lipid-transfer protein/seed storage 2S albumin"/>
    <property type="match status" value="1"/>
</dbReference>